<comment type="function">
    <text>Reduces L-sorbose 1-phosphate to D-glucitol 6-phosphate.</text>
</comment>
<comment type="cofactor">
    <cofactor evidence="1">
        <name>Zn(2+)</name>
        <dbReference type="ChEBI" id="CHEBI:29105"/>
    </cofactor>
</comment>
<comment type="similarity">
    <text evidence="2">Belongs to the zinc-containing alcohol dehydrogenase family.</text>
</comment>
<keyword id="KW-0479">Metal-binding</keyword>
<keyword id="KW-0520">NAD</keyword>
<keyword id="KW-0560">Oxidoreductase</keyword>
<keyword id="KW-0862">Zinc</keyword>
<reference key="1">
    <citation type="journal article" date="1994" name="Biochim. Biophys. Acta">
        <title>Sequence of the sor-operon for L-sorbose utilization from Klebsiella pneumoniae KAY2026.</title>
        <authorList>
            <person name="Wehmeier U.F."/>
            <person name="Lengeler J.W."/>
        </authorList>
    </citation>
    <scope>NUCLEOTIDE SEQUENCE [GENOMIC DNA]</scope>
    <source>
        <strain>1033-5P14 / KAY2026</strain>
    </source>
</reference>
<reference key="2">
    <citation type="journal article" date="1995" name="Res. Microbiol.">
        <title>Sorbose-1-P reductase (SorE) and the glucitol-6-P dehydrogenase (SorD) of the Klebsiella pneumoniae L-sorbose operon belong to the zinc-dependent dehydrogenase family and the short chain alcohol dehydrogenase family, respectively.</title>
        <authorList>
            <person name="Reizer J."/>
            <person name="Reizer A."/>
            <person name="Saier M.H. Jr."/>
        </authorList>
    </citation>
    <scope>SIMILARITY</scope>
</reference>
<name>SORE_KLEPN</name>
<protein>
    <recommendedName>
        <fullName>L-sorbose 1-phosphate reductase</fullName>
        <ecNumber>1.1.1.-</ecNumber>
    </recommendedName>
</protein>
<gene>
    <name type="primary">sorE</name>
</gene>
<evidence type="ECO:0000250" key="1">
    <source>
        <dbReference type="UniProtKB" id="O58389"/>
    </source>
</evidence>
<evidence type="ECO:0000305" key="2"/>
<feature type="chain" id="PRO_0000160925" description="L-sorbose 1-phosphate reductase">
    <location>
        <begin position="1"/>
        <end position="410"/>
    </location>
</feature>
<feature type="binding site" evidence="1">
    <location>
        <position position="40"/>
    </location>
    <ligand>
        <name>Zn(2+)</name>
        <dbReference type="ChEBI" id="CHEBI:29105"/>
        <note>catalytic</note>
    </ligand>
</feature>
<feature type="binding site" evidence="1">
    <location>
        <position position="69"/>
    </location>
    <ligand>
        <name>Zn(2+)</name>
        <dbReference type="ChEBI" id="CHEBI:29105"/>
        <note>catalytic</note>
    </ligand>
</feature>
<feature type="binding site" evidence="1">
    <location>
        <position position="70"/>
    </location>
    <ligand>
        <name>Zn(2+)</name>
        <dbReference type="ChEBI" id="CHEBI:29105"/>
        <note>catalytic</note>
    </ligand>
</feature>
<feature type="binding site" evidence="1">
    <location>
        <position position="221"/>
    </location>
    <ligand>
        <name>NAD(+)</name>
        <dbReference type="ChEBI" id="CHEBI:57540"/>
    </ligand>
</feature>
<feature type="binding site" evidence="1">
    <location>
        <begin position="309"/>
        <end position="310"/>
    </location>
    <ligand>
        <name>NAD(+)</name>
        <dbReference type="ChEBI" id="CHEBI:57540"/>
    </ligand>
</feature>
<sequence>MQTTTALRLYGKRDLRLETFTLPAMQDDEILARVVTDSLCLSSWKEANQGADHKKVPDDVATRPIIIGHEFCGEILAVGKKWQHKFQPGQRYVIQANLQLPDRPDCPGYSFPWIGGEATHVVIPNEVMAQDCLLTWEGDTWFEGSLVEPLSCVIGAFNANYHLQEGSYNHVMGIRPQGHTLILGGTGPMGLLAIDYALHGPINPSLLVVTDTNKPKLSYARRHYPSEPQTLIHYLDGHEASRDTLLALSGGHGFDDIFVFVPNEQLITLASSLLAPDGCLNFFAGPQDKQFSAPINFYDVHYAFTHYVGTSGGNTDDMRAAVALMQAKKVQTAKVVTHILGLNAAGETTLDLPAVGGGKKLVYTGKAFPLTPLGEIADPELAAIVARHHGIWSQEAEAYLLAHAEDITHD</sequence>
<proteinExistence type="inferred from homology"/>
<organism>
    <name type="scientific">Klebsiella pneumoniae</name>
    <dbReference type="NCBI Taxonomy" id="573"/>
    <lineage>
        <taxon>Bacteria</taxon>
        <taxon>Pseudomonadati</taxon>
        <taxon>Pseudomonadota</taxon>
        <taxon>Gammaproteobacteria</taxon>
        <taxon>Enterobacterales</taxon>
        <taxon>Enterobacteriaceae</taxon>
        <taxon>Klebsiella/Raoultella group</taxon>
        <taxon>Klebsiella</taxon>
        <taxon>Klebsiella pneumoniae complex</taxon>
    </lineage>
</organism>
<accession>P37084</accession>
<dbReference type="EC" id="1.1.1.-"/>
<dbReference type="EMBL" id="X66059">
    <property type="protein sequence ID" value="CAA46861.1"/>
    <property type="molecule type" value="Genomic_DNA"/>
</dbReference>
<dbReference type="PIR" id="S50191">
    <property type="entry name" value="S50191"/>
</dbReference>
<dbReference type="RefSeq" id="WP_002884587.1">
    <property type="nucleotide sequence ID" value="NZ_WYAL01000049.1"/>
</dbReference>
<dbReference type="SMR" id="P37084"/>
<dbReference type="GO" id="GO:0046872">
    <property type="term" value="F:metal ion binding"/>
    <property type="evidence" value="ECO:0007669"/>
    <property type="project" value="UniProtKB-KW"/>
</dbReference>
<dbReference type="GO" id="GO:0016491">
    <property type="term" value="F:oxidoreductase activity"/>
    <property type="evidence" value="ECO:0007669"/>
    <property type="project" value="UniProtKB-KW"/>
</dbReference>
<dbReference type="CDD" id="cd08238">
    <property type="entry name" value="sorbose_phosphate_red"/>
    <property type="match status" value="1"/>
</dbReference>
<dbReference type="Gene3D" id="3.90.180.10">
    <property type="entry name" value="Medium-chain alcohol dehydrogenases, catalytic domain"/>
    <property type="match status" value="1"/>
</dbReference>
<dbReference type="Gene3D" id="3.40.50.720">
    <property type="entry name" value="NAD(P)-binding Rossmann-like Domain"/>
    <property type="match status" value="1"/>
</dbReference>
<dbReference type="InterPro" id="IPR013154">
    <property type="entry name" value="ADH-like_N"/>
</dbReference>
<dbReference type="InterPro" id="IPR011032">
    <property type="entry name" value="GroES-like_sf"/>
</dbReference>
<dbReference type="InterPro" id="IPR036291">
    <property type="entry name" value="NAD(P)-bd_dom_sf"/>
</dbReference>
<dbReference type="InterPro" id="IPR050129">
    <property type="entry name" value="Zn_alcohol_dh"/>
</dbReference>
<dbReference type="PANTHER" id="PTHR43401">
    <property type="entry name" value="L-THREONINE 3-DEHYDROGENASE"/>
    <property type="match status" value="1"/>
</dbReference>
<dbReference type="PANTHER" id="PTHR43401:SF2">
    <property type="entry name" value="L-THREONINE 3-DEHYDROGENASE"/>
    <property type="match status" value="1"/>
</dbReference>
<dbReference type="Pfam" id="PF08240">
    <property type="entry name" value="ADH_N"/>
    <property type="match status" value="1"/>
</dbReference>
<dbReference type="SUPFAM" id="SSF50129">
    <property type="entry name" value="GroES-like"/>
    <property type="match status" value="1"/>
</dbReference>
<dbReference type="SUPFAM" id="SSF51735">
    <property type="entry name" value="NAD(P)-binding Rossmann-fold domains"/>
    <property type="match status" value="1"/>
</dbReference>